<keyword id="KW-0687">Ribonucleoprotein</keyword>
<keyword id="KW-0689">Ribosomal protein</keyword>
<keyword id="KW-0694">RNA-binding</keyword>
<keyword id="KW-0699">rRNA-binding</keyword>
<comment type="function">
    <text evidence="1">Binds to the 23S rRNA.</text>
</comment>
<comment type="similarity">
    <text evidence="1">Belongs to the bacterial ribosomal protein bL9 family.</text>
</comment>
<gene>
    <name evidence="1" type="primary">rplI</name>
    <name type="ordered locus">Clim_0150</name>
</gene>
<accession>B3EEB5</accession>
<protein>
    <recommendedName>
        <fullName evidence="1">Large ribosomal subunit protein bL9</fullName>
    </recommendedName>
    <alternativeName>
        <fullName evidence="2">50S ribosomal protein L9</fullName>
    </alternativeName>
</protein>
<dbReference type="EMBL" id="CP001097">
    <property type="protein sequence ID" value="ACD89249.1"/>
    <property type="molecule type" value="Genomic_DNA"/>
</dbReference>
<dbReference type="RefSeq" id="WP_012465130.1">
    <property type="nucleotide sequence ID" value="NC_010803.1"/>
</dbReference>
<dbReference type="SMR" id="B3EEB5"/>
<dbReference type="STRING" id="290315.Clim_0150"/>
<dbReference type="KEGG" id="cli:Clim_0150"/>
<dbReference type="eggNOG" id="COG0359">
    <property type="taxonomic scope" value="Bacteria"/>
</dbReference>
<dbReference type="HOGENOM" id="CLU_078938_3_0_10"/>
<dbReference type="OrthoDB" id="9788336at2"/>
<dbReference type="Proteomes" id="UP000008841">
    <property type="component" value="Chromosome"/>
</dbReference>
<dbReference type="GO" id="GO:1990904">
    <property type="term" value="C:ribonucleoprotein complex"/>
    <property type="evidence" value="ECO:0007669"/>
    <property type="project" value="UniProtKB-KW"/>
</dbReference>
<dbReference type="GO" id="GO:0005840">
    <property type="term" value="C:ribosome"/>
    <property type="evidence" value="ECO:0007669"/>
    <property type="project" value="UniProtKB-KW"/>
</dbReference>
<dbReference type="GO" id="GO:0019843">
    <property type="term" value="F:rRNA binding"/>
    <property type="evidence" value="ECO:0007669"/>
    <property type="project" value="UniProtKB-UniRule"/>
</dbReference>
<dbReference type="GO" id="GO:0003735">
    <property type="term" value="F:structural constituent of ribosome"/>
    <property type="evidence" value="ECO:0007669"/>
    <property type="project" value="InterPro"/>
</dbReference>
<dbReference type="GO" id="GO:0006412">
    <property type="term" value="P:translation"/>
    <property type="evidence" value="ECO:0007669"/>
    <property type="project" value="UniProtKB-UniRule"/>
</dbReference>
<dbReference type="FunFam" id="3.40.5.10:FF:000003">
    <property type="entry name" value="50S ribosomal protein L9"/>
    <property type="match status" value="1"/>
</dbReference>
<dbReference type="Gene3D" id="3.10.430.100">
    <property type="entry name" value="Ribosomal protein L9, C-terminal domain"/>
    <property type="match status" value="1"/>
</dbReference>
<dbReference type="Gene3D" id="3.40.5.10">
    <property type="entry name" value="Ribosomal protein L9, N-terminal domain"/>
    <property type="match status" value="1"/>
</dbReference>
<dbReference type="HAMAP" id="MF_00503">
    <property type="entry name" value="Ribosomal_bL9"/>
    <property type="match status" value="1"/>
</dbReference>
<dbReference type="InterPro" id="IPR000244">
    <property type="entry name" value="Ribosomal_bL9"/>
</dbReference>
<dbReference type="InterPro" id="IPR009027">
    <property type="entry name" value="Ribosomal_bL9/RNase_H1_N"/>
</dbReference>
<dbReference type="InterPro" id="IPR020594">
    <property type="entry name" value="Ribosomal_bL9_bac/chp"/>
</dbReference>
<dbReference type="InterPro" id="IPR020069">
    <property type="entry name" value="Ribosomal_bL9_C"/>
</dbReference>
<dbReference type="InterPro" id="IPR036791">
    <property type="entry name" value="Ribosomal_bL9_C_sf"/>
</dbReference>
<dbReference type="InterPro" id="IPR020070">
    <property type="entry name" value="Ribosomal_bL9_N"/>
</dbReference>
<dbReference type="InterPro" id="IPR036935">
    <property type="entry name" value="Ribosomal_bL9_N_sf"/>
</dbReference>
<dbReference type="NCBIfam" id="TIGR00158">
    <property type="entry name" value="L9"/>
    <property type="match status" value="1"/>
</dbReference>
<dbReference type="PANTHER" id="PTHR21368">
    <property type="entry name" value="50S RIBOSOMAL PROTEIN L9"/>
    <property type="match status" value="1"/>
</dbReference>
<dbReference type="Pfam" id="PF03948">
    <property type="entry name" value="Ribosomal_L9_C"/>
    <property type="match status" value="1"/>
</dbReference>
<dbReference type="Pfam" id="PF01281">
    <property type="entry name" value="Ribosomal_L9_N"/>
    <property type="match status" value="1"/>
</dbReference>
<dbReference type="SUPFAM" id="SSF55658">
    <property type="entry name" value="L9 N-domain-like"/>
    <property type="match status" value="1"/>
</dbReference>
<dbReference type="SUPFAM" id="SSF55653">
    <property type="entry name" value="Ribosomal protein L9 C-domain"/>
    <property type="match status" value="1"/>
</dbReference>
<dbReference type="PROSITE" id="PS00651">
    <property type="entry name" value="RIBOSOMAL_L9"/>
    <property type="match status" value="1"/>
</dbReference>
<name>RL9_CHLL2</name>
<sequence length="151" mass="16415">MKIILRKDVAALGDAGDVVAVKNGYANNYLIPQGMAIRATEGTLKALETEKKQQAKKIEQQRKNARDLAQKIEQMTLKVYAKAGESGKLFGTVTSADIAEALSAQGVEIDRRKITLEAPVKLLGKYEADAKLFMDVTVKVNFEVEAESSAS</sequence>
<organism>
    <name type="scientific">Chlorobium limicola (strain DSM 245 / NBRC 103803 / 6330)</name>
    <dbReference type="NCBI Taxonomy" id="290315"/>
    <lineage>
        <taxon>Bacteria</taxon>
        <taxon>Pseudomonadati</taxon>
        <taxon>Chlorobiota</taxon>
        <taxon>Chlorobiia</taxon>
        <taxon>Chlorobiales</taxon>
        <taxon>Chlorobiaceae</taxon>
        <taxon>Chlorobium/Pelodictyon group</taxon>
        <taxon>Chlorobium</taxon>
    </lineage>
</organism>
<proteinExistence type="inferred from homology"/>
<evidence type="ECO:0000255" key="1">
    <source>
        <dbReference type="HAMAP-Rule" id="MF_00503"/>
    </source>
</evidence>
<evidence type="ECO:0000305" key="2"/>
<reference key="1">
    <citation type="submission" date="2008-05" db="EMBL/GenBank/DDBJ databases">
        <title>Complete sequence of Chlorobium limicola DSM 245.</title>
        <authorList>
            <consortium name="US DOE Joint Genome Institute"/>
            <person name="Lucas S."/>
            <person name="Copeland A."/>
            <person name="Lapidus A."/>
            <person name="Glavina del Rio T."/>
            <person name="Dalin E."/>
            <person name="Tice H."/>
            <person name="Bruce D."/>
            <person name="Goodwin L."/>
            <person name="Pitluck S."/>
            <person name="Schmutz J."/>
            <person name="Larimer F."/>
            <person name="Land M."/>
            <person name="Hauser L."/>
            <person name="Kyrpides N."/>
            <person name="Ovchinnikova G."/>
            <person name="Zhao F."/>
            <person name="Li T."/>
            <person name="Liu Z."/>
            <person name="Overmann J."/>
            <person name="Bryant D.A."/>
            <person name="Richardson P."/>
        </authorList>
    </citation>
    <scope>NUCLEOTIDE SEQUENCE [LARGE SCALE GENOMIC DNA]</scope>
    <source>
        <strain>DSM 245 / NBRC 103803 / 6330</strain>
    </source>
</reference>
<feature type="chain" id="PRO_1000126884" description="Large ribosomal subunit protein bL9">
    <location>
        <begin position="1"/>
        <end position="151"/>
    </location>
</feature>